<sequence length="35" mass="3753">MSDINATRLPFVFVASPPCVGDDIAMVLTRGENLC</sequence>
<accession>U5L3J9</accession>
<organism>
    <name type="scientific">Amanita exitialis</name>
    <name type="common">Guangzhou destroying angel</name>
    <dbReference type="NCBI Taxonomy" id="262245"/>
    <lineage>
        <taxon>Eukaryota</taxon>
        <taxon>Fungi</taxon>
        <taxon>Dikarya</taxon>
        <taxon>Basidiomycota</taxon>
        <taxon>Agaricomycotina</taxon>
        <taxon>Agaricomycetes</taxon>
        <taxon>Agaricomycetidae</taxon>
        <taxon>Agaricales</taxon>
        <taxon>Pluteineae</taxon>
        <taxon>Amanitaceae</taxon>
        <taxon>Amanita</taxon>
    </lineage>
</organism>
<reference key="1">
    <citation type="journal article" date="2013" name="Gene">
        <title>Illumina-based de novo transcriptome sequencing and analysis of Amanita exitialis basidiocarps.</title>
        <authorList>
            <person name="Li P."/>
            <person name="Deng W.Q."/>
            <person name="Li T.H."/>
            <person name="Song B."/>
            <person name="Shen Y.H."/>
        </authorList>
    </citation>
    <scope>NUCLEOTIDE SEQUENCE [MRNA]</scope>
    <scope>FUNCTION</scope>
    <scope>TISSUE SPECIFICITY</scope>
</reference>
<name>MSD8_AMAEX</name>
<dbReference type="EMBL" id="KF387489">
    <property type="protein sequence ID" value="AGW83713.1"/>
    <property type="molecule type" value="mRNA"/>
</dbReference>
<dbReference type="GO" id="GO:0090729">
    <property type="term" value="F:toxin activity"/>
    <property type="evidence" value="ECO:0007669"/>
    <property type="project" value="UniProtKB-KW"/>
</dbReference>
<dbReference type="InterPro" id="IPR027582">
    <property type="entry name" value="Amanitin/phalloidin"/>
</dbReference>
<dbReference type="NCBIfam" id="TIGR04309">
    <property type="entry name" value="amanitin"/>
    <property type="match status" value="1"/>
</dbReference>
<keyword id="KW-0800">Toxin</keyword>
<comment type="function">
    <text evidence="5">Probable toxin that belongs to the MSDIN-like toxin family responsible for a large number of food poisoning cases and deaths (PubMed:24050899).</text>
</comment>
<comment type="tissue specificity">
    <text evidence="2">Expressed in basidiocarps (PubMed:24050899).</text>
</comment>
<comment type="PTM">
    <text evidence="1">Processed by the macrocyclase-peptidase enzyme POPB to yield a toxic cyclic octapeptide (By similarity). POPB first removes 10 residues from the N-terminus (By similarity). Conformational trapping of the remaining peptide forces the enzyme to release this intermediate rather than proceed to macrocyclization (By similarity). The enzyme rebinds the remaining peptide in a different conformation and catalyzes macrocyclization of the N-terminal 8 residues (By similarity).</text>
</comment>
<comment type="similarity">
    <text evidence="4">Belongs to the MSDIN fungal toxin family.</text>
</comment>
<proteinExistence type="evidence at transcript level"/>
<protein>
    <recommendedName>
        <fullName evidence="3">MSDIN-like toxin proprotein 8</fullName>
    </recommendedName>
    <component>
        <recommendedName>
            <fullName evidence="3">Toxin MSD8</fullName>
        </recommendedName>
    </component>
</protein>
<feature type="propeptide" id="PRO_0000443773" evidence="5">
    <location>
        <begin position="1"/>
        <end position="10"/>
    </location>
</feature>
<feature type="peptide" id="PRO_0000443774" description="Toxin MSD8" evidence="5">
    <location>
        <begin position="11"/>
        <end position="18"/>
    </location>
</feature>
<feature type="propeptide" id="PRO_0000443775" evidence="5">
    <location>
        <begin position="19"/>
        <end position="35"/>
    </location>
</feature>
<feature type="cross-link" description="Cyclopeptide (Phe-Pro)" evidence="5">
    <location>
        <begin position="11"/>
        <end position="18"/>
    </location>
</feature>
<evidence type="ECO:0000250" key="1">
    <source>
        <dbReference type="UniProtKB" id="A0A067SLB9"/>
    </source>
</evidence>
<evidence type="ECO:0000269" key="2">
    <source>
    </source>
</evidence>
<evidence type="ECO:0000303" key="3">
    <source>
    </source>
</evidence>
<evidence type="ECO:0000305" key="4"/>
<evidence type="ECO:0000305" key="5">
    <source>
    </source>
</evidence>